<evidence type="ECO:0000255" key="1">
    <source>
        <dbReference type="HAMAP-Rule" id="MF_01318"/>
    </source>
</evidence>
<evidence type="ECO:0000305" key="2"/>
<dbReference type="EMBL" id="AE017220">
    <property type="protein sequence ID" value="AAX67940.1"/>
    <property type="molecule type" value="Genomic_DNA"/>
</dbReference>
<dbReference type="RefSeq" id="WP_001096676.1">
    <property type="nucleotide sequence ID" value="NC_006905.1"/>
</dbReference>
<dbReference type="SMR" id="Q57H72"/>
<dbReference type="KEGG" id="sec:SCH_4034"/>
<dbReference type="HOGENOM" id="CLU_062853_0_0_6"/>
<dbReference type="Proteomes" id="UP000000538">
    <property type="component" value="Chromosome"/>
</dbReference>
<dbReference type="GO" id="GO:0022625">
    <property type="term" value="C:cytosolic large ribosomal subunit"/>
    <property type="evidence" value="ECO:0007669"/>
    <property type="project" value="TreeGrafter"/>
</dbReference>
<dbReference type="GO" id="GO:0019843">
    <property type="term" value="F:rRNA binding"/>
    <property type="evidence" value="ECO:0007669"/>
    <property type="project" value="UniProtKB-UniRule"/>
</dbReference>
<dbReference type="GO" id="GO:0003735">
    <property type="term" value="F:structural constituent of ribosome"/>
    <property type="evidence" value="ECO:0007669"/>
    <property type="project" value="InterPro"/>
</dbReference>
<dbReference type="GO" id="GO:0000049">
    <property type="term" value="F:tRNA binding"/>
    <property type="evidence" value="ECO:0007669"/>
    <property type="project" value="UniProtKB-KW"/>
</dbReference>
<dbReference type="GO" id="GO:0006417">
    <property type="term" value="P:regulation of translation"/>
    <property type="evidence" value="ECO:0007669"/>
    <property type="project" value="UniProtKB-KW"/>
</dbReference>
<dbReference type="GO" id="GO:0006412">
    <property type="term" value="P:translation"/>
    <property type="evidence" value="ECO:0007669"/>
    <property type="project" value="UniProtKB-UniRule"/>
</dbReference>
<dbReference type="CDD" id="cd00403">
    <property type="entry name" value="Ribosomal_L1"/>
    <property type="match status" value="1"/>
</dbReference>
<dbReference type="FunFam" id="3.40.50.790:FF:000001">
    <property type="entry name" value="50S ribosomal protein L1"/>
    <property type="match status" value="1"/>
</dbReference>
<dbReference type="Gene3D" id="3.30.190.20">
    <property type="match status" value="1"/>
</dbReference>
<dbReference type="Gene3D" id="3.40.50.790">
    <property type="match status" value="1"/>
</dbReference>
<dbReference type="HAMAP" id="MF_01318_B">
    <property type="entry name" value="Ribosomal_uL1_B"/>
    <property type="match status" value="1"/>
</dbReference>
<dbReference type="InterPro" id="IPR005878">
    <property type="entry name" value="Ribosom_uL1_bac-type"/>
</dbReference>
<dbReference type="InterPro" id="IPR002143">
    <property type="entry name" value="Ribosomal_uL1"/>
</dbReference>
<dbReference type="InterPro" id="IPR023674">
    <property type="entry name" value="Ribosomal_uL1-like"/>
</dbReference>
<dbReference type="InterPro" id="IPR028364">
    <property type="entry name" value="Ribosomal_uL1/biogenesis"/>
</dbReference>
<dbReference type="InterPro" id="IPR016095">
    <property type="entry name" value="Ribosomal_uL1_3-a/b-sand"/>
</dbReference>
<dbReference type="InterPro" id="IPR023673">
    <property type="entry name" value="Ribosomal_uL1_CS"/>
</dbReference>
<dbReference type="NCBIfam" id="TIGR01169">
    <property type="entry name" value="rplA_bact"/>
    <property type="match status" value="1"/>
</dbReference>
<dbReference type="PANTHER" id="PTHR36427">
    <property type="entry name" value="54S RIBOSOMAL PROTEIN L1, MITOCHONDRIAL"/>
    <property type="match status" value="1"/>
</dbReference>
<dbReference type="PANTHER" id="PTHR36427:SF3">
    <property type="entry name" value="LARGE RIBOSOMAL SUBUNIT PROTEIN UL1M"/>
    <property type="match status" value="1"/>
</dbReference>
<dbReference type="Pfam" id="PF00687">
    <property type="entry name" value="Ribosomal_L1"/>
    <property type="match status" value="1"/>
</dbReference>
<dbReference type="PIRSF" id="PIRSF002155">
    <property type="entry name" value="Ribosomal_L1"/>
    <property type="match status" value="1"/>
</dbReference>
<dbReference type="SUPFAM" id="SSF56808">
    <property type="entry name" value="Ribosomal protein L1"/>
    <property type="match status" value="1"/>
</dbReference>
<dbReference type="PROSITE" id="PS01199">
    <property type="entry name" value="RIBOSOMAL_L1"/>
    <property type="match status" value="1"/>
</dbReference>
<keyword id="KW-0678">Repressor</keyword>
<keyword id="KW-0687">Ribonucleoprotein</keyword>
<keyword id="KW-0689">Ribosomal protein</keyword>
<keyword id="KW-0694">RNA-binding</keyword>
<keyword id="KW-0699">rRNA-binding</keyword>
<keyword id="KW-0810">Translation regulation</keyword>
<keyword id="KW-0820">tRNA-binding</keyword>
<reference key="1">
    <citation type="journal article" date="2005" name="Nucleic Acids Res.">
        <title>The genome sequence of Salmonella enterica serovar Choleraesuis, a highly invasive and resistant zoonotic pathogen.</title>
        <authorList>
            <person name="Chiu C.-H."/>
            <person name="Tang P."/>
            <person name="Chu C."/>
            <person name="Hu S."/>
            <person name="Bao Q."/>
            <person name="Yu J."/>
            <person name="Chou Y.-Y."/>
            <person name="Wang H.-S."/>
            <person name="Lee Y.-S."/>
        </authorList>
    </citation>
    <scope>NUCLEOTIDE SEQUENCE [LARGE SCALE GENOMIC DNA]</scope>
    <source>
        <strain>SC-B67</strain>
    </source>
</reference>
<sequence length="234" mass="24729">MAKLTKRMRVIREKVDATKQYDINEAIALLKELATAKFNESVDVAVNLGIDARKSDQNVRGATVLPHGTGRSVRVAVFTQGPNAEAAKAAGAELVGMEDLADQIKKGEMNFDVVIASPDAMRVVGQLGQVLGPRGLMPNPKVGTVTPNVAEAVKNAKAGQVRYRNDKNGIIHTTIGKVDFDADKLKENLEALLVALKKAKPSQAKGVYIKKVSISTTMGAGVAVDQAGLSASAN</sequence>
<gene>
    <name evidence="1" type="primary">rplA</name>
    <name type="ordered locus">SCH_4034</name>
</gene>
<proteinExistence type="inferred from homology"/>
<protein>
    <recommendedName>
        <fullName evidence="1">Large ribosomal subunit protein uL1</fullName>
    </recommendedName>
    <alternativeName>
        <fullName evidence="2">50S ribosomal protein L1</fullName>
    </alternativeName>
</protein>
<organism>
    <name type="scientific">Salmonella choleraesuis (strain SC-B67)</name>
    <dbReference type="NCBI Taxonomy" id="321314"/>
    <lineage>
        <taxon>Bacteria</taxon>
        <taxon>Pseudomonadati</taxon>
        <taxon>Pseudomonadota</taxon>
        <taxon>Gammaproteobacteria</taxon>
        <taxon>Enterobacterales</taxon>
        <taxon>Enterobacteriaceae</taxon>
        <taxon>Salmonella</taxon>
    </lineage>
</organism>
<name>RL1_SALCH</name>
<accession>Q57H72</accession>
<feature type="chain" id="PRO_0000230635" description="Large ribosomal subunit protein uL1">
    <location>
        <begin position="1"/>
        <end position="234"/>
    </location>
</feature>
<comment type="function">
    <text evidence="1">Binds directly to 23S rRNA. The L1 stalk is quite mobile in the ribosome, and is involved in E site tRNA release.</text>
</comment>
<comment type="function">
    <text evidence="1">Protein L1 is also a translational repressor protein, it controls the translation of the L11 operon by binding to its mRNA.</text>
</comment>
<comment type="subunit">
    <text evidence="1">Part of the 50S ribosomal subunit.</text>
</comment>
<comment type="similarity">
    <text evidence="1">Belongs to the universal ribosomal protein uL1 family.</text>
</comment>